<accession>A1WCN6</accession>
<keyword id="KW-0963">Cytoplasm</keyword>
<keyword id="KW-0251">Elongation factor</keyword>
<keyword id="KW-0342">GTP-binding</keyword>
<keyword id="KW-0378">Hydrolase</keyword>
<keyword id="KW-0460">Magnesium</keyword>
<keyword id="KW-0479">Metal-binding</keyword>
<keyword id="KW-0547">Nucleotide-binding</keyword>
<keyword id="KW-0648">Protein biosynthesis</keyword>
<name>EFTU2_ACISJ</name>
<proteinExistence type="inferred from homology"/>
<evidence type="ECO:0000250" key="1"/>
<evidence type="ECO:0000255" key="2">
    <source>
        <dbReference type="HAMAP-Rule" id="MF_00118"/>
    </source>
</evidence>
<sequence length="396" mass="43243">MAKGKFERTKPHVNVGTIGHVDHGKTTLTAAIATVLSKKFGGEAKGYDQIDNAPEEKARGITINTSHVEYETATRHYAHVDCPGHADYVKNMITGAAQMDGAILVCSAADGPMPQTREHILLARQVGVPYIIVFLNKCDMVDDEELLELVEMEVRELLDKYDFPGDDTPIIRGSAKLALEGDQSDKGEPAILRLAEALDTYIPTPERAVDGAFLMPVEDVFSISGRGTVVTGRVERGIIKVGEEIEIVGIRDTQKTTVTGVEMFRKLLDQGQAGDNVGLLLRGTKREDVERGQVLCKPGSIKPHTHFTAEVYVLSKDEGGRHTPFFNNYRPQFYFRTTDVTGSIELPADKEMVMPGDNVSITVKLINPIAMEEGLRFAIREGGRTVGAGVVAKIIA</sequence>
<organism>
    <name type="scientific">Acidovorax sp. (strain JS42)</name>
    <dbReference type="NCBI Taxonomy" id="232721"/>
    <lineage>
        <taxon>Bacteria</taxon>
        <taxon>Pseudomonadati</taxon>
        <taxon>Pseudomonadota</taxon>
        <taxon>Betaproteobacteria</taxon>
        <taxon>Burkholderiales</taxon>
        <taxon>Comamonadaceae</taxon>
        <taxon>Acidovorax</taxon>
    </lineage>
</organism>
<comment type="function">
    <text evidence="2">GTP hydrolase that promotes the GTP-dependent binding of aminoacyl-tRNA to the A-site of ribosomes during protein biosynthesis.</text>
</comment>
<comment type="catalytic activity">
    <reaction evidence="2">
        <text>GTP + H2O = GDP + phosphate + H(+)</text>
        <dbReference type="Rhea" id="RHEA:19669"/>
        <dbReference type="ChEBI" id="CHEBI:15377"/>
        <dbReference type="ChEBI" id="CHEBI:15378"/>
        <dbReference type="ChEBI" id="CHEBI:37565"/>
        <dbReference type="ChEBI" id="CHEBI:43474"/>
        <dbReference type="ChEBI" id="CHEBI:58189"/>
        <dbReference type="EC" id="3.6.5.3"/>
    </reaction>
    <physiologicalReaction direction="left-to-right" evidence="2">
        <dbReference type="Rhea" id="RHEA:19670"/>
    </physiologicalReaction>
</comment>
<comment type="subunit">
    <text evidence="2">Monomer.</text>
</comment>
<comment type="subcellular location">
    <subcellularLocation>
        <location evidence="2">Cytoplasm</location>
    </subcellularLocation>
</comment>
<comment type="similarity">
    <text evidence="2">Belongs to the TRAFAC class translation factor GTPase superfamily. Classic translation factor GTPase family. EF-Tu/EF-1A subfamily.</text>
</comment>
<gene>
    <name evidence="2" type="primary">tuf2</name>
    <name type="ordered locus">Ajs_3904</name>
</gene>
<reference key="1">
    <citation type="submission" date="2006-12" db="EMBL/GenBank/DDBJ databases">
        <title>Complete sequence of chromosome 1 of Acidovorax sp. JS42.</title>
        <authorList>
            <person name="Copeland A."/>
            <person name="Lucas S."/>
            <person name="Lapidus A."/>
            <person name="Barry K."/>
            <person name="Detter J.C."/>
            <person name="Glavina del Rio T."/>
            <person name="Dalin E."/>
            <person name="Tice H."/>
            <person name="Pitluck S."/>
            <person name="Chertkov O."/>
            <person name="Brettin T."/>
            <person name="Bruce D."/>
            <person name="Han C."/>
            <person name="Tapia R."/>
            <person name="Gilna P."/>
            <person name="Schmutz J."/>
            <person name="Larimer F."/>
            <person name="Land M."/>
            <person name="Hauser L."/>
            <person name="Kyrpides N."/>
            <person name="Kim E."/>
            <person name="Stahl D."/>
            <person name="Richardson P."/>
        </authorList>
    </citation>
    <scope>NUCLEOTIDE SEQUENCE [LARGE SCALE GENOMIC DNA]</scope>
    <source>
        <strain>JS42</strain>
    </source>
</reference>
<feature type="chain" id="PRO_0000337300" description="Elongation factor Tu 2">
    <location>
        <begin position="1"/>
        <end position="396"/>
    </location>
</feature>
<feature type="domain" description="tr-type G">
    <location>
        <begin position="10"/>
        <end position="206"/>
    </location>
</feature>
<feature type="region of interest" description="G1" evidence="1">
    <location>
        <begin position="19"/>
        <end position="26"/>
    </location>
</feature>
<feature type="region of interest" description="G2" evidence="1">
    <location>
        <begin position="60"/>
        <end position="64"/>
    </location>
</feature>
<feature type="region of interest" description="G3" evidence="1">
    <location>
        <begin position="81"/>
        <end position="84"/>
    </location>
</feature>
<feature type="region of interest" description="G4" evidence="1">
    <location>
        <begin position="136"/>
        <end position="139"/>
    </location>
</feature>
<feature type="region of interest" description="G5" evidence="1">
    <location>
        <begin position="174"/>
        <end position="176"/>
    </location>
</feature>
<feature type="binding site" evidence="2">
    <location>
        <begin position="19"/>
        <end position="26"/>
    </location>
    <ligand>
        <name>GTP</name>
        <dbReference type="ChEBI" id="CHEBI:37565"/>
    </ligand>
</feature>
<feature type="binding site" evidence="2">
    <location>
        <position position="26"/>
    </location>
    <ligand>
        <name>Mg(2+)</name>
        <dbReference type="ChEBI" id="CHEBI:18420"/>
    </ligand>
</feature>
<feature type="binding site" evidence="2">
    <location>
        <begin position="81"/>
        <end position="85"/>
    </location>
    <ligand>
        <name>GTP</name>
        <dbReference type="ChEBI" id="CHEBI:37565"/>
    </ligand>
</feature>
<feature type="binding site" evidence="2">
    <location>
        <begin position="136"/>
        <end position="139"/>
    </location>
    <ligand>
        <name>GTP</name>
        <dbReference type="ChEBI" id="CHEBI:37565"/>
    </ligand>
</feature>
<protein>
    <recommendedName>
        <fullName evidence="2">Elongation factor Tu 2</fullName>
        <shortName evidence="2">EF-Tu 2</shortName>
        <ecNumber evidence="2">3.6.5.3</ecNumber>
    </recommendedName>
</protein>
<dbReference type="EC" id="3.6.5.3" evidence="2"/>
<dbReference type="EMBL" id="CP000539">
    <property type="protein sequence ID" value="ABM44011.1"/>
    <property type="molecule type" value="Genomic_DNA"/>
</dbReference>
<dbReference type="SMR" id="A1WCN6"/>
<dbReference type="STRING" id="232721.Ajs_3904"/>
<dbReference type="KEGG" id="ajs:Ajs_3904"/>
<dbReference type="eggNOG" id="COG0050">
    <property type="taxonomic scope" value="Bacteria"/>
</dbReference>
<dbReference type="HOGENOM" id="CLU_007265_0_0_4"/>
<dbReference type="Proteomes" id="UP000000645">
    <property type="component" value="Chromosome"/>
</dbReference>
<dbReference type="GO" id="GO:0005829">
    <property type="term" value="C:cytosol"/>
    <property type="evidence" value="ECO:0007669"/>
    <property type="project" value="TreeGrafter"/>
</dbReference>
<dbReference type="GO" id="GO:0005525">
    <property type="term" value="F:GTP binding"/>
    <property type="evidence" value="ECO:0007669"/>
    <property type="project" value="UniProtKB-UniRule"/>
</dbReference>
<dbReference type="GO" id="GO:0003924">
    <property type="term" value="F:GTPase activity"/>
    <property type="evidence" value="ECO:0007669"/>
    <property type="project" value="InterPro"/>
</dbReference>
<dbReference type="GO" id="GO:0097216">
    <property type="term" value="F:guanosine tetraphosphate binding"/>
    <property type="evidence" value="ECO:0007669"/>
    <property type="project" value="UniProtKB-ARBA"/>
</dbReference>
<dbReference type="GO" id="GO:0003746">
    <property type="term" value="F:translation elongation factor activity"/>
    <property type="evidence" value="ECO:0007669"/>
    <property type="project" value="UniProtKB-UniRule"/>
</dbReference>
<dbReference type="CDD" id="cd01884">
    <property type="entry name" value="EF_Tu"/>
    <property type="match status" value="1"/>
</dbReference>
<dbReference type="CDD" id="cd03697">
    <property type="entry name" value="EFTU_II"/>
    <property type="match status" value="1"/>
</dbReference>
<dbReference type="CDD" id="cd03707">
    <property type="entry name" value="EFTU_III"/>
    <property type="match status" value="1"/>
</dbReference>
<dbReference type="FunFam" id="2.40.30.10:FF:000001">
    <property type="entry name" value="Elongation factor Tu"/>
    <property type="match status" value="1"/>
</dbReference>
<dbReference type="FunFam" id="3.40.50.300:FF:000003">
    <property type="entry name" value="Elongation factor Tu"/>
    <property type="match status" value="1"/>
</dbReference>
<dbReference type="Gene3D" id="3.40.50.300">
    <property type="entry name" value="P-loop containing nucleotide triphosphate hydrolases"/>
    <property type="match status" value="1"/>
</dbReference>
<dbReference type="Gene3D" id="2.40.30.10">
    <property type="entry name" value="Translation factors"/>
    <property type="match status" value="2"/>
</dbReference>
<dbReference type="HAMAP" id="MF_00118_B">
    <property type="entry name" value="EF_Tu_B"/>
    <property type="match status" value="1"/>
</dbReference>
<dbReference type="InterPro" id="IPR041709">
    <property type="entry name" value="EF-Tu_GTP-bd"/>
</dbReference>
<dbReference type="InterPro" id="IPR050055">
    <property type="entry name" value="EF-Tu_GTPase"/>
</dbReference>
<dbReference type="InterPro" id="IPR004161">
    <property type="entry name" value="EFTu-like_2"/>
</dbReference>
<dbReference type="InterPro" id="IPR033720">
    <property type="entry name" value="EFTU_2"/>
</dbReference>
<dbReference type="InterPro" id="IPR031157">
    <property type="entry name" value="G_TR_CS"/>
</dbReference>
<dbReference type="InterPro" id="IPR027417">
    <property type="entry name" value="P-loop_NTPase"/>
</dbReference>
<dbReference type="InterPro" id="IPR005225">
    <property type="entry name" value="Small_GTP-bd"/>
</dbReference>
<dbReference type="InterPro" id="IPR000795">
    <property type="entry name" value="T_Tr_GTP-bd_dom"/>
</dbReference>
<dbReference type="InterPro" id="IPR009000">
    <property type="entry name" value="Transl_B-barrel_sf"/>
</dbReference>
<dbReference type="InterPro" id="IPR009001">
    <property type="entry name" value="Transl_elong_EF1A/Init_IF2_C"/>
</dbReference>
<dbReference type="InterPro" id="IPR004541">
    <property type="entry name" value="Transl_elong_EFTu/EF1A_bac/org"/>
</dbReference>
<dbReference type="InterPro" id="IPR004160">
    <property type="entry name" value="Transl_elong_EFTu/EF1A_C"/>
</dbReference>
<dbReference type="NCBIfam" id="TIGR00485">
    <property type="entry name" value="EF-Tu"/>
    <property type="match status" value="1"/>
</dbReference>
<dbReference type="NCBIfam" id="NF000766">
    <property type="entry name" value="PRK00049.1"/>
    <property type="match status" value="1"/>
</dbReference>
<dbReference type="NCBIfam" id="NF009372">
    <property type="entry name" value="PRK12735.1"/>
    <property type="match status" value="1"/>
</dbReference>
<dbReference type="NCBIfam" id="NF009373">
    <property type="entry name" value="PRK12736.1"/>
    <property type="match status" value="1"/>
</dbReference>
<dbReference type="NCBIfam" id="TIGR00231">
    <property type="entry name" value="small_GTP"/>
    <property type="match status" value="1"/>
</dbReference>
<dbReference type="PANTHER" id="PTHR43721:SF22">
    <property type="entry name" value="ELONGATION FACTOR TU, MITOCHONDRIAL"/>
    <property type="match status" value="1"/>
</dbReference>
<dbReference type="PANTHER" id="PTHR43721">
    <property type="entry name" value="ELONGATION FACTOR TU-RELATED"/>
    <property type="match status" value="1"/>
</dbReference>
<dbReference type="Pfam" id="PF00009">
    <property type="entry name" value="GTP_EFTU"/>
    <property type="match status" value="1"/>
</dbReference>
<dbReference type="Pfam" id="PF03144">
    <property type="entry name" value="GTP_EFTU_D2"/>
    <property type="match status" value="1"/>
</dbReference>
<dbReference type="Pfam" id="PF03143">
    <property type="entry name" value="GTP_EFTU_D3"/>
    <property type="match status" value="1"/>
</dbReference>
<dbReference type="PRINTS" id="PR00315">
    <property type="entry name" value="ELONGATNFCT"/>
</dbReference>
<dbReference type="SUPFAM" id="SSF50465">
    <property type="entry name" value="EF-Tu/eEF-1alpha/eIF2-gamma C-terminal domain"/>
    <property type="match status" value="1"/>
</dbReference>
<dbReference type="SUPFAM" id="SSF52540">
    <property type="entry name" value="P-loop containing nucleoside triphosphate hydrolases"/>
    <property type="match status" value="1"/>
</dbReference>
<dbReference type="SUPFAM" id="SSF50447">
    <property type="entry name" value="Translation proteins"/>
    <property type="match status" value="1"/>
</dbReference>
<dbReference type="PROSITE" id="PS00301">
    <property type="entry name" value="G_TR_1"/>
    <property type="match status" value="1"/>
</dbReference>
<dbReference type="PROSITE" id="PS51722">
    <property type="entry name" value="G_TR_2"/>
    <property type="match status" value="1"/>
</dbReference>